<gene>
    <name evidence="1" type="primary">atpE</name>
    <name type="ordered locus">Saci_1547</name>
</gene>
<proteinExistence type="inferred from homology"/>
<name>AATE_SULAC</name>
<dbReference type="EMBL" id="CP000077">
    <property type="protein sequence ID" value="AAY80860.1"/>
    <property type="molecule type" value="Genomic_DNA"/>
</dbReference>
<dbReference type="RefSeq" id="WP_011278362.1">
    <property type="nucleotide sequence ID" value="NC_007181.1"/>
</dbReference>
<dbReference type="SMR" id="Q4J8M1"/>
<dbReference type="STRING" id="330779.Saci_1547"/>
<dbReference type="GeneID" id="14552040"/>
<dbReference type="KEGG" id="sai:Saci_1547"/>
<dbReference type="PATRIC" id="fig|330779.12.peg.1487"/>
<dbReference type="eggNOG" id="arCOG00869">
    <property type="taxonomic scope" value="Archaea"/>
</dbReference>
<dbReference type="HOGENOM" id="CLU_1412391_0_0_2"/>
<dbReference type="Proteomes" id="UP000001018">
    <property type="component" value="Chromosome"/>
</dbReference>
<dbReference type="GO" id="GO:0005886">
    <property type="term" value="C:plasma membrane"/>
    <property type="evidence" value="ECO:0007669"/>
    <property type="project" value="UniProtKB-SubCell"/>
</dbReference>
<dbReference type="GO" id="GO:0033178">
    <property type="term" value="C:proton-transporting two-sector ATPase complex, catalytic domain"/>
    <property type="evidence" value="ECO:0007669"/>
    <property type="project" value="InterPro"/>
</dbReference>
<dbReference type="GO" id="GO:0005524">
    <property type="term" value="F:ATP binding"/>
    <property type="evidence" value="ECO:0007669"/>
    <property type="project" value="UniProtKB-UniRule"/>
</dbReference>
<dbReference type="GO" id="GO:0046933">
    <property type="term" value="F:proton-transporting ATP synthase activity, rotational mechanism"/>
    <property type="evidence" value="ECO:0007669"/>
    <property type="project" value="UniProtKB-UniRule"/>
</dbReference>
<dbReference type="GO" id="GO:0046961">
    <property type="term" value="F:proton-transporting ATPase activity, rotational mechanism"/>
    <property type="evidence" value="ECO:0007669"/>
    <property type="project" value="InterPro"/>
</dbReference>
<dbReference type="GO" id="GO:0042777">
    <property type="term" value="P:proton motive force-driven plasma membrane ATP synthesis"/>
    <property type="evidence" value="ECO:0007669"/>
    <property type="project" value="UniProtKB-UniRule"/>
</dbReference>
<dbReference type="Gene3D" id="3.30.2320.30">
    <property type="entry name" value="ATP synthase, E subunit, C-terminal"/>
    <property type="match status" value="1"/>
</dbReference>
<dbReference type="HAMAP" id="MF_00311">
    <property type="entry name" value="ATP_synth_E_arch"/>
    <property type="match status" value="1"/>
</dbReference>
<dbReference type="InterPro" id="IPR038495">
    <property type="entry name" value="ATPase_E_C"/>
</dbReference>
<dbReference type="InterPro" id="IPR002842">
    <property type="entry name" value="ATPase_V1_Esu"/>
</dbReference>
<dbReference type="Pfam" id="PF01991">
    <property type="entry name" value="vATP-synt_E"/>
    <property type="match status" value="1"/>
</dbReference>
<dbReference type="SUPFAM" id="SSF160527">
    <property type="entry name" value="V-type ATPase subunit E-like"/>
    <property type="match status" value="1"/>
</dbReference>
<protein>
    <recommendedName>
        <fullName evidence="1">A-type ATP synthase subunit E</fullName>
    </recommendedName>
</protein>
<comment type="function">
    <text evidence="1">Component of the A-type ATP synthase that produces ATP from ADP in the presence of a proton gradient across the membrane.</text>
</comment>
<comment type="subunit">
    <text evidence="1">Has multiple subunits with at least A(3), B(3), C, D, E, F, H, I and proteolipid K(x).</text>
</comment>
<comment type="subcellular location">
    <subcellularLocation>
        <location evidence="1">Cell membrane</location>
        <topology evidence="1">Peripheral membrane protein</topology>
    </subcellularLocation>
</comment>
<comment type="similarity">
    <text evidence="1">Belongs to the V-ATPase E subunit family.</text>
</comment>
<accession>Q4J8M1</accession>
<evidence type="ECO:0000255" key="1">
    <source>
        <dbReference type="HAMAP-Rule" id="MF_00311"/>
    </source>
</evidence>
<feature type="chain" id="PRO_0000117324" description="A-type ATP synthase subunit E">
    <location>
        <begin position="1"/>
        <end position="192"/>
    </location>
</feature>
<sequence>MVDFEELLSKTQEVEKKKIDEELKKAFTEANLIVDEAYNEILSEYSKRIQEIISKNIEALRGEEAKLEVETKRAVNKEKDYWVQQVFQKTLDELEKIANTKDYKNRIESILSRELTEGAIVYCSNNDKKFIEGILTTKRINNVSVEVDNSIKGGVKIYYPDKKLTRDFTLKTILNQIFEDLRDDVARILFGE</sequence>
<reference key="1">
    <citation type="journal article" date="2005" name="J. Bacteriol.">
        <title>The genome of Sulfolobus acidocaldarius, a model organism of the Crenarchaeota.</title>
        <authorList>
            <person name="Chen L."/>
            <person name="Bruegger K."/>
            <person name="Skovgaard M."/>
            <person name="Redder P."/>
            <person name="She Q."/>
            <person name="Torarinsson E."/>
            <person name="Greve B."/>
            <person name="Awayez M."/>
            <person name="Zibat A."/>
            <person name="Klenk H.-P."/>
            <person name="Garrett R.A."/>
        </authorList>
    </citation>
    <scope>NUCLEOTIDE SEQUENCE [LARGE SCALE GENOMIC DNA]</scope>
    <source>
        <strain>ATCC 33909 / DSM 639 / JCM 8929 / NBRC 15157 / NCIMB 11770</strain>
    </source>
</reference>
<organism>
    <name type="scientific">Sulfolobus acidocaldarius (strain ATCC 33909 / DSM 639 / JCM 8929 / NBRC 15157 / NCIMB 11770)</name>
    <dbReference type="NCBI Taxonomy" id="330779"/>
    <lineage>
        <taxon>Archaea</taxon>
        <taxon>Thermoproteota</taxon>
        <taxon>Thermoprotei</taxon>
        <taxon>Sulfolobales</taxon>
        <taxon>Sulfolobaceae</taxon>
        <taxon>Sulfolobus</taxon>
    </lineage>
</organism>
<keyword id="KW-0066">ATP synthesis</keyword>
<keyword id="KW-1003">Cell membrane</keyword>
<keyword id="KW-0375">Hydrogen ion transport</keyword>
<keyword id="KW-0406">Ion transport</keyword>
<keyword id="KW-0472">Membrane</keyword>
<keyword id="KW-1185">Reference proteome</keyword>
<keyword id="KW-0813">Transport</keyword>